<protein>
    <recommendedName>
        <fullName evidence="1">Carbamoyl phosphate synthase large chain</fullName>
        <ecNumber evidence="1">6.3.4.16</ecNumber>
        <ecNumber evidence="1">6.3.5.5</ecNumber>
    </recommendedName>
    <alternativeName>
        <fullName evidence="1">Carbamoyl phosphate synthetase ammonia chain</fullName>
    </alternativeName>
</protein>
<reference key="1">
    <citation type="journal article" date="2001" name="Microb. Drug Resist.">
        <title>Annotated draft genomic sequence from a Streptococcus pneumoniae type 19F clinical isolate.</title>
        <authorList>
            <person name="Dopazo J."/>
            <person name="Mendoza A."/>
            <person name="Herrero J."/>
            <person name="Caldara F."/>
            <person name="Humbert Y."/>
            <person name="Friedli L."/>
            <person name="Guerrier M."/>
            <person name="Grand-Schenk E."/>
            <person name="Gandin C."/>
            <person name="de Francesco M."/>
            <person name="Polissi A."/>
            <person name="Buell G."/>
            <person name="Feger G."/>
            <person name="Garcia E."/>
            <person name="Peitsch M."/>
            <person name="Garcia-Bustos J.F."/>
        </authorList>
    </citation>
    <scope>NUCLEOTIDE SEQUENCE [LARGE SCALE GENOMIC DNA]</scope>
    <source>
        <strain>G54</strain>
    </source>
</reference>
<reference key="2">
    <citation type="submission" date="2008-03" db="EMBL/GenBank/DDBJ databases">
        <title>Pneumococcal beta glucoside metabolism investigated by whole genome comparison.</title>
        <authorList>
            <person name="Mulas L."/>
            <person name="Trappetti C."/>
            <person name="Hakenbeck R."/>
            <person name="Iannelli F."/>
            <person name="Pozzi G."/>
            <person name="Davidsen T.M."/>
            <person name="Tettelin H."/>
            <person name="Oggioni M."/>
        </authorList>
    </citation>
    <scope>NUCLEOTIDE SEQUENCE [LARGE SCALE GENOMIC DNA]</scope>
    <source>
        <strain>G54</strain>
    </source>
</reference>
<evidence type="ECO:0000255" key="1">
    <source>
        <dbReference type="HAMAP-Rule" id="MF_01210"/>
    </source>
</evidence>
<feature type="chain" id="PRO_1000138899" description="Carbamoyl phosphate synthase large chain">
    <location>
        <begin position="1"/>
        <end position="1058"/>
    </location>
</feature>
<feature type="domain" description="ATP-grasp 1" evidence="1">
    <location>
        <begin position="133"/>
        <end position="327"/>
    </location>
</feature>
<feature type="domain" description="ATP-grasp 2" evidence="1">
    <location>
        <begin position="671"/>
        <end position="861"/>
    </location>
</feature>
<feature type="domain" description="MGS-like" evidence="1">
    <location>
        <begin position="930"/>
        <end position="1058"/>
    </location>
</feature>
<feature type="region of interest" description="Carboxyphosphate synthetic domain" evidence="1">
    <location>
        <begin position="1"/>
        <end position="401"/>
    </location>
</feature>
<feature type="region of interest" description="Oligomerization domain" evidence="1">
    <location>
        <begin position="402"/>
        <end position="546"/>
    </location>
</feature>
<feature type="region of interest" description="Carbamoyl phosphate synthetic domain" evidence="1">
    <location>
        <begin position="547"/>
        <end position="929"/>
    </location>
</feature>
<feature type="region of interest" description="Allosteric domain" evidence="1">
    <location>
        <begin position="930"/>
        <end position="1058"/>
    </location>
</feature>
<feature type="binding site" evidence="1">
    <location>
        <position position="129"/>
    </location>
    <ligand>
        <name>ATP</name>
        <dbReference type="ChEBI" id="CHEBI:30616"/>
        <label>1</label>
    </ligand>
</feature>
<feature type="binding site" evidence="1">
    <location>
        <position position="169"/>
    </location>
    <ligand>
        <name>ATP</name>
        <dbReference type="ChEBI" id="CHEBI:30616"/>
        <label>1</label>
    </ligand>
</feature>
<feature type="binding site" evidence="1">
    <location>
        <position position="175"/>
    </location>
    <ligand>
        <name>ATP</name>
        <dbReference type="ChEBI" id="CHEBI:30616"/>
        <label>1</label>
    </ligand>
</feature>
<feature type="binding site" evidence="1">
    <location>
        <position position="176"/>
    </location>
    <ligand>
        <name>ATP</name>
        <dbReference type="ChEBI" id="CHEBI:30616"/>
        <label>1</label>
    </ligand>
</feature>
<feature type="binding site" evidence="1">
    <location>
        <position position="208"/>
    </location>
    <ligand>
        <name>ATP</name>
        <dbReference type="ChEBI" id="CHEBI:30616"/>
        <label>1</label>
    </ligand>
</feature>
<feature type="binding site" evidence="1">
    <location>
        <position position="210"/>
    </location>
    <ligand>
        <name>ATP</name>
        <dbReference type="ChEBI" id="CHEBI:30616"/>
        <label>1</label>
    </ligand>
</feature>
<feature type="binding site" evidence="1">
    <location>
        <position position="215"/>
    </location>
    <ligand>
        <name>ATP</name>
        <dbReference type="ChEBI" id="CHEBI:30616"/>
        <label>1</label>
    </ligand>
</feature>
<feature type="binding site" evidence="1">
    <location>
        <position position="241"/>
    </location>
    <ligand>
        <name>ATP</name>
        <dbReference type="ChEBI" id="CHEBI:30616"/>
        <label>1</label>
    </ligand>
</feature>
<feature type="binding site" evidence="1">
    <location>
        <position position="242"/>
    </location>
    <ligand>
        <name>ATP</name>
        <dbReference type="ChEBI" id="CHEBI:30616"/>
        <label>1</label>
    </ligand>
</feature>
<feature type="binding site" evidence="1">
    <location>
        <position position="243"/>
    </location>
    <ligand>
        <name>ATP</name>
        <dbReference type="ChEBI" id="CHEBI:30616"/>
        <label>1</label>
    </ligand>
</feature>
<feature type="binding site" evidence="1">
    <location>
        <position position="284"/>
    </location>
    <ligand>
        <name>ATP</name>
        <dbReference type="ChEBI" id="CHEBI:30616"/>
        <label>1</label>
    </ligand>
</feature>
<feature type="binding site" evidence="1">
    <location>
        <position position="284"/>
    </location>
    <ligand>
        <name>Mg(2+)</name>
        <dbReference type="ChEBI" id="CHEBI:18420"/>
        <label>1</label>
    </ligand>
</feature>
<feature type="binding site" evidence="1">
    <location>
        <position position="284"/>
    </location>
    <ligand>
        <name>Mn(2+)</name>
        <dbReference type="ChEBI" id="CHEBI:29035"/>
        <label>1</label>
    </ligand>
</feature>
<feature type="binding site" evidence="1">
    <location>
        <position position="298"/>
    </location>
    <ligand>
        <name>ATP</name>
        <dbReference type="ChEBI" id="CHEBI:30616"/>
        <label>1</label>
    </ligand>
</feature>
<feature type="binding site" evidence="1">
    <location>
        <position position="298"/>
    </location>
    <ligand>
        <name>Mg(2+)</name>
        <dbReference type="ChEBI" id="CHEBI:18420"/>
        <label>1</label>
    </ligand>
</feature>
<feature type="binding site" evidence="1">
    <location>
        <position position="298"/>
    </location>
    <ligand>
        <name>Mg(2+)</name>
        <dbReference type="ChEBI" id="CHEBI:18420"/>
        <label>2</label>
    </ligand>
</feature>
<feature type="binding site" evidence="1">
    <location>
        <position position="298"/>
    </location>
    <ligand>
        <name>Mn(2+)</name>
        <dbReference type="ChEBI" id="CHEBI:29035"/>
        <label>1</label>
    </ligand>
</feature>
<feature type="binding site" evidence="1">
    <location>
        <position position="298"/>
    </location>
    <ligand>
        <name>Mn(2+)</name>
        <dbReference type="ChEBI" id="CHEBI:29035"/>
        <label>2</label>
    </ligand>
</feature>
<feature type="binding site" evidence="1">
    <location>
        <position position="300"/>
    </location>
    <ligand>
        <name>Mg(2+)</name>
        <dbReference type="ChEBI" id="CHEBI:18420"/>
        <label>2</label>
    </ligand>
</feature>
<feature type="binding site" evidence="1">
    <location>
        <position position="300"/>
    </location>
    <ligand>
        <name>Mn(2+)</name>
        <dbReference type="ChEBI" id="CHEBI:29035"/>
        <label>2</label>
    </ligand>
</feature>
<feature type="binding site" evidence="1">
    <location>
        <position position="707"/>
    </location>
    <ligand>
        <name>ATP</name>
        <dbReference type="ChEBI" id="CHEBI:30616"/>
        <label>2</label>
    </ligand>
</feature>
<feature type="binding site" evidence="1">
    <location>
        <position position="746"/>
    </location>
    <ligand>
        <name>ATP</name>
        <dbReference type="ChEBI" id="CHEBI:30616"/>
        <label>2</label>
    </ligand>
</feature>
<feature type="binding site" evidence="1">
    <location>
        <position position="748"/>
    </location>
    <ligand>
        <name>ATP</name>
        <dbReference type="ChEBI" id="CHEBI:30616"/>
        <label>2</label>
    </ligand>
</feature>
<feature type="binding site" evidence="1">
    <location>
        <position position="752"/>
    </location>
    <ligand>
        <name>ATP</name>
        <dbReference type="ChEBI" id="CHEBI:30616"/>
        <label>2</label>
    </ligand>
</feature>
<feature type="binding site" evidence="1">
    <location>
        <position position="777"/>
    </location>
    <ligand>
        <name>ATP</name>
        <dbReference type="ChEBI" id="CHEBI:30616"/>
        <label>2</label>
    </ligand>
</feature>
<feature type="binding site" evidence="1">
    <location>
        <position position="778"/>
    </location>
    <ligand>
        <name>ATP</name>
        <dbReference type="ChEBI" id="CHEBI:30616"/>
        <label>2</label>
    </ligand>
</feature>
<feature type="binding site" evidence="1">
    <location>
        <position position="779"/>
    </location>
    <ligand>
        <name>ATP</name>
        <dbReference type="ChEBI" id="CHEBI:30616"/>
        <label>2</label>
    </ligand>
</feature>
<feature type="binding site" evidence="1">
    <location>
        <position position="780"/>
    </location>
    <ligand>
        <name>ATP</name>
        <dbReference type="ChEBI" id="CHEBI:30616"/>
        <label>2</label>
    </ligand>
</feature>
<feature type="binding site" evidence="1">
    <location>
        <position position="820"/>
    </location>
    <ligand>
        <name>ATP</name>
        <dbReference type="ChEBI" id="CHEBI:30616"/>
        <label>2</label>
    </ligand>
</feature>
<feature type="binding site" evidence="1">
    <location>
        <position position="820"/>
    </location>
    <ligand>
        <name>Mg(2+)</name>
        <dbReference type="ChEBI" id="CHEBI:18420"/>
        <label>3</label>
    </ligand>
</feature>
<feature type="binding site" evidence="1">
    <location>
        <position position="820"/>
    </location>
    <ligand>
        <name>Mn(2+)</name>
        <dbReference type="ChEBI" id="CHEBI:29035"/>
        <label>3</label>
    </ligand>
</feature>
<feature type="binding site" evidence="1">
    <location>
        <position position="832"/>
    </location>
    <ligand>
        <name>ATP</name>
        <dbReference type="ChEBI" id="CHEBI:30616"/>
        <label>2</label>
    </ligand>
</feature>
<feature type="binding site" evidence="1">
    <location>
        <position position="832"/>
    </location>
    <ligand>
        <name>Mg(2+)</name>
        <dbReference type="ChEBI" id="CHEBI:18420"/>
        <label>3</label>
    </ligand>
</feature>
<feature type="binding site" evidence="1">
    <location>
        <position position="832"/>
    </location>
    <ligand>
        <name>Mg(2+)</name>
        <dbReference type="ChEBI" id="CHEBI:18420"/>
        <label>4</label>
    </ligand>
</feature>
<feature type="binding site" evidence="1">
    <location>
        <position position="832"/>
    </location>
    <ligand>
        <name>Mn(2+)</name>
        <dbReference type="ChEBI" id="CHEBI:29035"/>
        <label>3</label>
    </ligand>
</feature>
<feature type="binding site" evidence="1">
    <location>
        <position position="832"/>
    </location>
    <ligand>
        <name>Mn(2+)</name>
        <dbReference type="ChEBI" id="CHEBI:29035"/>
        <label>4</label>
    </ligand>
</feature>
<feature type="binding site" evidence="1">
    <location>
        <position position="834"/>
    </location>
    <ligand>
        <name>Mg(2+)</name>
        <dbReference type="ChEBI" id="CHEBI:18420"/>
        <label>4</label>
    </ligand>
</feature>
<feature type="binding site" evidence="1">
    <location>
        <position position="834"/>
    </location>
    <ligand>
        <name>Mn(2+)</name>
        <dbReference type="ChEBI" id="CHEBI:29035"/>
        <label>4</label>
    </ligand>
</feature>
<proteinExistence type="inferred from homology"/>
<organism>
    <name type="scientific">Streptococcus pneumoniae serotype 19F (strain G54)</name>
    <dbReference type="NCBI Taxonomy" id="512566"/>
    <lineage>
        <taxon>Bacteria</taxon>
        <taxon>Bacillati</taxon>
        <taxon>Bacillota</taxon>
        <taxon>Bacilli</taxon>
        <taxon>Lactobacillales</taxon>
        <taxon>Streptococcaceae</taxon>
        <taxon>Streptococcus</taxon>
    </lineage>
</organism>
<keyword id="KW-0028">Amino-acid biosynthesis</keyword>
<keyword id="KW-0055">Arginine biosynthesis</keyword>
<keyword id="KW-0067">ATP-binding</keyword>
<keyword id="KW-0436">Ligase</keyword>
<keyword id="KW-0460">Magnesium</keyword>
<keyword id="KW-0464">Manganese</keyword>
<keyword id="KW-0479">Metal-binding</keyword>
<keyword id="KW-0547">Nucleotide-binding</keyword>
<keyword id="KW-0665">Pyrimidine biosynthesis</keyword>
<keyword id="KW-0677">Repeat</keyword>
<accession>B5E512</accession>
<name>CARB_STRP4</name>
<sequence>MPKRTDIQKIMVIGSGPIIIGQAAEFDYAGTQACLSLKEEGYEVVLVNSNPATIMTDKEIADKVYIEPITLEFVTRILRKERPDALLPTLGGQTGLNMAMELSKNGILDELGVELLGTRLSAIDQAEDRDLFKQLMEELEQPIPESEIVNTVEEAIAFAATIGYPVIVRPAFTLGGTGGGMCANEKELREITENGLKLSPVTQCLIERSIAGFKEIEYEVMRDSADNALVVCNMENFDPVGIHTGDSIVFAPAQTMSDYENQMLRDASLSIIRALKIEGGCNVQLALDPNSFKYYVIEVNPRVSRSSALASKATGYPIAKLAAKIAVGLTLDEVINPVTGSTYAMFEPALDYVVAKIPRFPFDKFEKGERRLGTQMKATGEVMAIGRNIEESLLKACRSLEIGVHHNEIPELAAVSDDTLIEKVVKAQDDRLFYVSEAIRRGYTPEEIAELTKIDIFYLDKLLHIFEIEQELGAHPQDLEVLKIAKLNGFSDRKIAELWGTTDDQVRQLRLENKIVPVYKMVDTCAAEFDSETPYFYSTYGWENESIRSDKESVLVLGSGPIRIGQGVEFDYATVHSVKAIQAAGYEAIIMNSNPETVSTDFSVSDKLYFEPLTFEDVMNVIDLEQPKGVIVQFGGQTAINLAEPLAKAGVTILGTQVADLDRAEDRDLFEQALKELDIPQPPGQTATNEEEAALAARKIGFPVLVRPSYVLGGRAMEIVENEEDLRSYMRTAVKASPDHPVLVDSYIVGQECEVDAISDGKNVLIPGIMEHIERAGVHSGDSMAVYPPQTLSQKVQETIADYTKRLAIGLHCLGMMNIQFVIKDEKVYVIEVNPRASRTVPFLSKVTNIPMAQVATKLILGQSLSELGYQNGLYPESTRVHIKAPVFSFTKLAKVDSLLGPEMKSTGEVMGSDATLEKALYKAFEASYLHLPTFGNVVFTIADDAKEEALNLARRFQNIGYGILATEGTAAFFASHGLQAQPVGKIGDDDKDIPSFVRKGRIQAIINTVGTKRTADEDGEQIRRSAIEHGVPLFTALDTANAMLKVLESRSFVTEAI</sequence>
<comment type="function">
    <text evidence="1">Large subunit of the glutamine-dependent carbamoyl phosphate synthetase (CPSase). CPSase catalyzes the formation of carbamoyl phosphate from the ammonia moiety of glutamine, carbonate, and phosphate donated by ATP, constituting the first step of 2 biosynthetic pathways, one leading to arginine and/or urea and the other to pyrimidine nucleotides. The large subunit (synthetase) binds the substrates ammonia (free or transferred from glutamine from the small subunit), hydrogencarbonate and ATP and carries out an ATP-coupled ligase reaction, activating hydrogencarbonate by forming carboxy phosphate which reacts with ammonia to form carbamoyl phosphate.</text>
</comment>
<comment type="catalytic activity">
    <reaction evidence="1">
        <text>hydrogencarbonate + L-glutamine + 2 ATP + H2O = carbamoyl phosphate + L-glutamate + 2 ADP + phosphate + 2 H(+)</text>
        <dbReference type="Rhea" id="RHEA:18633"/>
        <dbReference type="ChEBI" id="CHEBI:15377"/>
        <dbReference type="ChEBI" id="CHEBI:15378"/>
        <dbReference type="ChEBI" id="CHEBI:17544"/>
        <dbReference type="ChEBI" id="CHEBI:29985"/>
        <dbReference type="ChEBI" id="CHEBI:30616"/>
        <dbReference type="ChEBI" id="CHEBI:43474"/>
        <dbReference type="ChEBI" id="CHEBI:58228"/>
        <dbReference type="ChEBI" id="CHEBI:58359"/>
        <dbReference type="ChEBI" id="CHEBI:456216"/>
        <dbReference type="EC" id="6.3.5.5"/>
    </reaction>
</comment>
<comment type="catalytic activity">
    <molecule>Carbamoyl phosphate synthase large chain</molecule>
    <reaction evidence="1">
        <text>hydrogencarbonate + NH4(+) + 2 ATP = carbamoyl phosphate + 2 ADP + phosphate + 2 H(+)</text>
        <dbReference type="Rhea" id="RHEA:18029"/>
        <dbReference type="ChEBI" id="CHEBI:15378"/>
        <dbReference type="ChEBI" id="CHEBI:17544"/>
        <dbReference type="ChEBI" id="CHEBI:28938"/>
        <dbReference type="ChEBI" id="CHEBI:30616"/>
        <dbReference type="ChEBI" id="CHEBI:43474"/>
        <dbReference type="ChEBI" id="CHEBI:58228"/>
        <dbReference type="ChEBI" id="CHEBI:456216"/>
        <dbReference type="EC" id="6.3.4.16"/>
    </reaction>
</comment>
<comment type="cofactor">
    <cofactor evidence="1">
        <name>Mg(2+)</name>
        <dbReference type="ChEBI" id="CHEBI:18420"/>
    </cofactor>
    <cofactor evidence="1">
        <name>Mn(2+)</name>
        <dbReference type="ChEBI" id="CHEBI:29035"/>
    </cofactor>
    <text evidence="1">Binds 4 Mg(2+) or Mn(2+) ions per subunit.</text>
</comment>
<comment type="pathway">
    <text evidence="1">Amino-acid biosynthesis; L-arginine biosynthesis; carbamoyl phosphate from bicarbonate: step 1/1.</text>
</comment>
<comment type="pathway">
    <text evidence="1">Pyrimidine metabolism; UMP biosynthesis via de novo pathway; (S)-dihydroorotate from bicarbonate: step 1/3.</text>
</comment>
<comment type="subunit">
    <text evidence="1">Composed of two chains; the small (or glutamine) chain promotes the hydrolysis of glutamine to ammonia, which is used by the large (or ammonia) chain to synthesize carbamoyl phosphate. Tetramer of heterodimers (alpha,beta)4.</text>
</comment>
<comment type="domain">
    <text evidence="1">The large subunit is composed of 2 ATP-grasp domains that are involved in binding the 2 ATP molecules needed for carbamoyl phosphate synthesis. The N-terminal ATP-grasp domain (referred to as the carboxyphosphate synthetic component) catalyzes the ATP-dependent phosphorylation of hydrogencarbonate to carboxyphosphate and the subsequent nucleophilic attack by ammonia to form a carbamate intermediate. The C-terminal ATP-grasp domain (referred to as the carbamoyl phosphate synthetic component) then catalyzes the phosphorylation of carbamate with the second ATP to form the end product carbamoyl phosphate. The reactive and unstable enzyme intermediates are sequentially channeled from one active site to the next through the interior of the protein over a distance of at least 96 A.</text>
</comment>
<comment type="similarity">
    <text evidence="1">Belongs to the CarB family.</text>
</comment>
<gene>
    <name evidence="1" type="primary">carB</name>
    <name type="ordered locus">SPG_1169</name>
</gene>
<dbReference type="EC" id="6.3.4.16" evidence="1"/>
<dbReference type="EC" id="6.3.5.5" evidence="1"/>
<dbReference type="EMBL" id="CP001015">
    <property type="protein sequence ID" value="ACF56322.1"/>
    <property type="molecule type" value="Genomic_DNA"/>
</dbReference>
<dbReference type="SMR" id="B5E512"/>
<dbReference type="KEGG" id="spx:SPG_1169"/>
<dbReference type="HOGENOM" id="CLU_000513_1_2_9"/>
<dbReference type="UniPathway" id="UPA00068">
    <property type="reaction ID" value="UER00171"/>
</dbReference>
<dbReference type="UniPathway" id="UPA00070">
    <property type="reaction ID" value="UER00115"/>
</dbReference>
<dbReference type="GO" id="GO:0005737">
    <property type="term" value="C:cytoplasm"/>
    <property type="evidence" value="ECO:0007669"/>
    <property type="project" value="TreeGrafter"/>
</dbReference>
<dbReference type="GO" id="GO:0005524">
    <property type="term" value="F:ATP binding"/>
    <property type="evidence" value="ECO:0007669"/>
    <property type="project" value="UniProtKB-UniRule"/>
</dbReference>
<dbReference type="GO" id="GO:0004087">
    <property type="term" value="F:carbamoyl-phosphate synthase (ammonia) activity"/>
    <property type="evidence" value="ECO:0007669"/>
    <property type="project" value="RHEA"/>
</dbReference>
<dbReference type="GO" id="GO:0004088">
    <property type="term" value="F:carbamoyl-phosphate synthase (glutamine-hydrolyzing) activity"/>
    <property type="evidence" value="ECO:0007669"/>
    <property type="project" value="UniProtKB-UniRule"/>
</dbReference>
<dbReference type="GO" id="GO:0046872">
    <property type="term" value="F:metal ion binding"/>
    <property type="evidence" value="ECO:0007669"/>
    <property type="project" value="UniProtKB-KW"/>
</dbReference>
<dbReference type="GO" id="GO:0044205">
    <property type="term" value="P:'de novo' UMP biosynthetic process"/>
    <property type="evidence" value="ECO:0007669"/>
    <property type="project" value="UniProtKB-UniRule"/>
</dbReference>
<dbReference type="GO" id="GO:0006541">
    <property type="term" value="P:glutamine metabolic process"/>
    <property type="evidence" value="ECO:0007669"/>
    <property type="project" value="TreeGrafter"/>
</dbReference>
<dbReference type="GO" id="GO:0006526">
    <property type="term" value="P:L-arginine biosynthetic process"/>
    <property type="evidence" value="ECO:0007669"/>
    <property type="project" value="UniProtKB-UniRule"/>
</dbReference>
<dbReference type="CDD" id="cd01424">
    <property type="entry name" value="MGS_CPS_II"/>
    <property type="match status" value="1"/>
</dbReference>
<dbReference type="FunFam" id="1.10.1030.10:FF:000002">
    <property type="entry name" value="Carbamoyl-phosphate synthase large chain"/>
    <property type="match status" value="1"/>
</dbReference>
<dbReference type="FunFam" id="3.30.1490.20:FF:000001">
    <property type="entry name" value="Carbamoyl-phosphate synthase large chain"/>
    <property type="match status" value="1"/>
</dbReference>
<dbReference type="FunFam" id="3.30.470.20:FF:000001">
    <property type="entry name" value="Carbamoyl-phosphate synthase large chain"/>
    <property type="match status" value="1"/>
</dbReference>
<dbReference type="FunFam" id="3.30.470.20:FF:000026">
    <property type="entry name" value="Carbamoyl-phosphate synthase large chain"/>
    <property type="match status" value="1"/>
</dbReference>
<dbReference type="FunFam" id="3.40.50.1380:FF:000017">
    <property type="entry name" value="Carbamoyl-phosphate synthase large chain"/>
    <property type="match status" value="1"/>
</dbReference>
<dbReference type="FunFam" id="3.40.50.20:FF:000001">
    <property type="entry name" value="Carbamoyl-phosphate synthase large chain"/>
    <property type="match status" value="2"/>
</dbReference>
<dbReference type="Gene3D" id="3.40.50.20">
    <property type="match status" value="2"/>
</dbReference>
<dbReference type="Gene3D" id="3.30.1490.20">
    <property type="entry name" value="ATP-grasp fold, A domain"/>
    <property type="match status" value="1"/>
</dbReference>
<dbReference type="Gene3D" id="3.30.470.20">
    <property type="entry name" value="ATP-grasp fold, B domain"/>
    <property type="match status" value="2"/>
</dbReference>
<dbReference type="Gene3D" id="1.10.1030.10">
    <property type="entry name" value="Carbamoyl-phosphate synthetase, large subunit oligomerisation domain"/>
    <property type="match status" value="1"/>
</dbReference>
<dbReference type="Gene3D" id="3.40.50.1380">
    <property type="entry name" value="Methylglyoxal synthase-like domain"/>
    <property type="match status" value="1"/>
</dbReference>
<dbReference type="HAMAP" id="MF_01210_A">
    <property type="entry name" value="CPSase_L_chain_A"/>
    <property type="match status" value="1"/>
</dbReference>
<dbReference type="HAMAP" id="MF_01210_B">
    <property type="entry name" value="CPSase_L_chain_B"/>
    <property type="match status" value="1"/>
</dbReference>
<dbReference type="InterPro" id="IPR011761">
    <property type="entry name" value="ATP-grasp"/>
</dbReference>
<dbReference type="InterPro" id="IPR013815">
    <property type="entry name" value="ATP_grasp_subdomain_1"/>
</dbReference>
<dbReference type="InterPro" id="IPR006275">
    <property type="entry name" value="CarbamoylP_synth_lsu"/>
</dbReference>
<dbReference type="InterPro" id="IPR005480">
    <property type="entry name" value="CarbamoylP_synth_lsu_oligo"/>
</dbReference>
<dbReference type="InterPro" id="IPR036897">
    <property type="entry name" value="CarbamoylP_synth_lsu_oligo_sf"/>
</dbReference>
<dbReference type="InterPro" id="IPR005479">
    <property type="entry name" value="CbamoylP_synth_lsu-like_ATP-bd"/>
</dbReference>
<dbReference type="InterPro" id="IPR005483">
    <property type="entry name" value="CbamoylP_synth_lsu_CPSase_dom"/>
</dbReference>
<dbReference type="InterPro" id="IPR011607">
    <property type="entry name" value="MGS-like_dom"/>
</dbReference>
<dbReference type="InterPro" id="IPR036914">
    <property type="entry name" value="MGS-like_dom_sf"/>
</dbReference>
<dbReference type="InterPro" id="IPR033937">
    <property type="entry name" value="MGS_CPS_CarB"/>
</dbReference>
<dbReference type="InterPro" id="IPR016185">
    <property type="entry name" value="PreATP-grasp_dom_sf"/>
</dbReference>
<dbReference type="NCBIfam" id="TIGR01369">
    <property type="entry name" value="CPSaseII_lrg"/>
    <property type="match status" value="1"/>
</dbReference>
<dbReference type="NCBIfam" id="NF003671">
    <property type="entry name" value="PRK05294.1"/>
    <property type="match status" value="1"/>
</dbReference>
<dbReference type="NCBIfam" id="NF009455">
    <property type="entry name" value="PRK12815.1"/>
    <property type="match status" value="1"/>
</dbReference>
<dbReference type="PANTHER" id="PTHR11405:SF53">
    <property type="entry name" value="CARBAMOYL-PHOSPHATE SYNTHASE [AMMONIA], MITOCHONDRIAL"/>
    <property type="match status" value="1"/>
</dbReference>
<dbReference type="PANTHER" id="PTHR11405">
    <property type="entry name" value="CARBAMOYLTRANSFERASE FAMILY MEMBER"/>
    <property type="match status" value="1"/>
</dbReference>
<dbReference type="Pfam" id="PF02786">
    <property type="entry name" value="CPSase_L_D2"/>
    <property type="match status" value="2"/>
</dbReference>
<dbReference type="Pfam" id="PF02787">
    <property type="entry name" value="CPSase_L_D3"/>
    <property type="match status" value="1"/>
</dbReference>
<dbReference type="Pfam" id="PF02142">
    <property type="entry name" value="MGS"/>
    <property type="match status" value="1"/>
</dbReference>
<dbReference type="PRINTS" id="PR00098">
    <property type="entry name" value="CPSASE"/>
</dbReference>
<dbReference type="SMART" id="SM01096">
    <property type="entry name" value="CPSase_L_D3"/>
    <property type="match status" value="1"/>
</dbReference>
<dbReference type="SMART" id="SM01209">
    <property type="entry name" value="GARS_A"/>
    <property type="match status" value="1"/>
</dbReference>
<dbReference type="SMART" id="SM00851">
    <property type="entry name" value="MGS"/>
    <property type="match status" value="1"/>
</dbReference>
<dbReference type="SUPFAM" id="SSF48108">
    <property type="entry name" value="Carbamoyl phosphate synthetase, large subunit connection domain"/>
    <property type="match status" value="1"/>
</dbReference>
<dbReference type="SUPFAM" id="SSF56059">
    <property type="entry name" value="Glutathione synthetase ATP-binding domain-like"/>
    <property type="match status" value="2"/>
</dbReference>
<dbReference type="SUPFAM" id="SSF52335">
    <property type="entry name" value="Methylglyoxal synthase-like"/>
    <property type="match status" value="1"/>
</dbReference>
<dbReference type="SUPFAM" id="SSF52440">
    <property type="entry name" value="PreATP-grasp domain"/>
    <property type="match status" value="2"/>
</dbReference>
<dbReference type="PROSITE" id="PS50975">
    <property type="entry name" value="ATP_GRASP"/>
    <property type="match status" value="2"/>
</dbReference>
<dbReference type="PROSITE" id="PS00866">
    <property type="entry name" value="CPSASE_1"/>
    <property type="match status" value="2"/>
</dbReference>
<dbReference type="PROSITE" id="PS00867">
    <property type="entry name" value="CPSASE_2"/>
    <property type="match status" value="2"/>
</dbReference>
<dbReference type="PROSITE" id="PS51855">
    <property type="entry name" value="MGS"/>
    <property type="match status" value="1"/>
</dbReference>